<gene>
    <name evidence="9 12" type="primary">mys-1</name>
    <name type="ORF">VC5.4</name>
</gene>
<sequence>MTEPKKEIIEDENHGISKKIPTDPRQYEKVTEGCRLLVMMASQEEERWAEVISRCRAANGSIKFYVHYIDCNRRLDEWVQSDRLNLASCELPKKGGKKGAHLREENRDSNENEGKKSGRKRKIPLLPMDDLKAESVDPLQAISTMTSGSTPSLRGSMSMVGHSEDAMTRIRNVECIELGRSRIQPWYFAPYPQQLTSLDCIYICEFCLKYLKSKTCLKRHMEKCAMCHPPGNQIYSHDKLSFFEIDGRKNKSYAQNLCLLAKLFLDHKTLYYDTDPFLFYVLTEEDEKGHHIVGYFSKEKESAEEYNVACILVLPPFQKKGYGSLLIEFSYELSKIEQKTGSPEKPLSDLGLLSYRSYWSMAIMKELFAFKRRHPGEDITVQDISQSTSIKREDVVSTLQQLDLYKYYKGSYIIVISDEKRQVYEKRIEAAKKKTRINPAALQWRPKEYGKKRAQIMF</sequence>
<comment type="function">
    <text evidence="6 7 8">Probable catalytic subunit of the Tip60 chromatin-remodeling complex (PubMed:15068795). Plays a role in acetylation of nucleosomal histone H4 and perhaps also H2A, probably acting as a component of the Tip60 histone acetyltransferase complex (PubMed:15068795, PubMed:28794203). Acts in the determination of vulval and distal tip cell (DTC) precursor cell fates (PubMed:15068795, PubMed:20181741). Involved in the positive regulation of transcription factor daf-16, probably acting by histone acetylation; thereby modulating stress resistance (PubMed:28794203).</text>
</comment>
<comment type="catalytic activity">
    <reaction evidence="1">
        <text>L-lysyl-[protein] + acetyl-CoA = N(6)-acetyl-L-lysyl-[protein] + CoA + H(+)</text>
        <dbReference type="Rhea" id="RHEA:45948"/>
        <dbReference type="Rhea" id="RHEA-COMP:9752"/>
        <dbReference type="Rhea" id="RHEA-COMP:10731"/>
        <dbReference type="ChEBI" id="CHEBI:15378"/>
        <dbReference type="ChEBI" id="CHEBI:29969"/>
        <dbReference type="ChEBI" id="CHEBI:57287"/>
        <dbReference type="ChEBI" id="CHEBI:57288"/>
        <dbReference type="ChEBI" id="CHEBI:61930"/>
        <dbReference type="EC" id="2.3.1.48"/>
    </reaction>
</comment>
<comment type="subunit">
    <text evidence="8 10">Interacts with transcription-associated protein trr-1 (PubMed:28794203). Probably a component of a complex with histone acetyltransferase (HAT) activity, at least composed of mys-1 and trr-1 (PubMed:28794203).</text>
</comment>
<comment type="subcellular location">
    <subcellularLocation>
        <location evidence="1">Nucleus</location>
    </subcellularLocation>
</comment>
<comment type="PTM">
    <text evidence="2">Autoacetylation at Lys-268 is required for binding histones with high affinity and for proper function.</text>
</comment>
<comment type="disruption phenotype">
    <text evidence="8">RNAi-mediated knockdown suppresses time-restricted diet-induced lifespan extension and also the age-dependent decline in locomotor activity (PubMed:28794203). Reduces expression of transcription factor daf-16 at transcript and protein level (PubMed:28794203). Reduces expression of superoxide dismutase sod-3 and of hsp-12.6, but not of eat-2, daf-2, pha-4, hsf-1, and skn-1 (PubMed:28794203). Reduces resistance to oxidative stress (PubMed:28794203). Reduces acetylation of histone H4, drastically at 'Lys-16' and modestly at 'Lys-12', respectively; does not affect acetylation levels of histone H3 (PubMed:28794203).</text>
</comment>
<comment type="similarity">
    <text evidence="11">Belongs to the MYST (SAS/MOZ) family.</text>
</comment>
<protein>
    <recommendedName>
        <fullName>Histone acetyltransferase Tip60 homolog</fullName>
        <ecNumber evidence="1">2.3.1.48</ecNumber>
    </recommendedName>
    <alternativeName>
        <fullName evidence="9">Myst family histone acetyltransferase-like protein 1</fullName>
    </alternativeName>
</protein>
<name>TIP60_CAEEL</name>
<proteinExistence type="evidence at protein level"/>
<feature type="chain" id="PRO_0000245807" description="Histone acetyltransferase Tip60 homolog">
    <location>
        <begin position="1"/>
        <end position="458"/>
    </location>
</feature>
<feature type="domain" description="Tudor-knot" evidence="3">
    <location>
        <begin position="30"/>
        <end position="86"/>
    </location>
</feature>
<feature type="domain" description="MYST-type HAT" evidence="4">
    <location>
        <begin position="168"/>
        <end position="446"/>
    </location>
</feature>
<feature type="zinc finger region" description="C2HC MYST-type" evidence="4">
    <location>
        <begin position="201"/>
        <end position="226"/>
    </location>
</feature>
<feature type="region of interest" description="Disordered" evidence="5">
    <location>
        <begin position="1"/>
        <end position="24"/>
    </location>
</feature>
<feature type="region of interest" description="Disordered" evidence="5">
    <location>
        <begin position="94"/>
        <end position="123"/>
    </location>
</feature>
<feature type="compositionally biased region" description="Basic and acidic residues" evidence="5">
    <location>
        <begin position="101"/>
        <end position="116"/>
    </location>
</feature>
<feature type="active site" description="Proton donor/acceptor" evidence="2">
    <location>
        <position position="344"/>
    </location>
</feature>
<feature type="binding site" evidence="2">
    <location>
        <begin position="311"/>
        <end position="313"/>
    </location>
    <ligand>
        <name>acetyl-CoA</name>
        <dbReference type="ChEBI" id="CHEBI:57288"/>
    </ligand>
</feature>
<feature type="binding site" evidence="2">
    <location>
        <begin position="318"/>
        <end position="324"/>
    </location>
    <ligand>
        <name>acetyl-CoA</name>
        <dbReference type="ChEBI" id="CHEBI:57288"/>
    </ligand>
</feature>
<feature type="binding site" evidence="2">
    <location>
        <position position="348"/>
    </location>
    <ligand>
        <name>acetyl-CoA</name>
        <dbReference type="ChEBI" id="CHEBI:57288"/>
    </ligand>
</feature>
<feature type="binding site" evidence="2">
    <location>
        <position position="357"/>
    </location>
    <ligand>
        <name>acetyl-CoA</name>
        <dbReference type="ChEBI" id="CHEBI:57288"/>
    </ligand>
</feature>
<feature type="modified residue" description="N6-acetyllysine; by autocatalysis" evidence="2">
    <location>
        <position position="268"/>
    </location>
</feature>
<reference key="1">
    <citation type="journal article" date="2004" name="Dev. Cell">
        <title>A new class of C. elegans synMuv genes implicates a Tip60/NuA4-like HAT complex as a negative regulator of Ras signaling.</title>
        <authorList>
            <person name="Ceol C.J."/>
            <person name="Horvitz H.R."/>
        </authorList>
    </citation>
    <scope>NUCLEOTIDE SEQUENCE [MRNA]</scope>
    <scope>FUNCTION</scope>
</reference>
<reference key="2">
    <citation type="journal article" date="1998" name="Science">
        <title>Genome sequence of the nematode C. elegans: a platform for investigating biology.</title>
        <authorList>
            <consortium name="The C. elegans sequencing consortium"/>
        </authorList>
    </citation>
    <scope>NUCLEOTIDE SEQUENCE [LARGE SCALE GENOMIC DNA]</scope>
    <source>
        <strain>Bristol N2</strain>
    </source>
</reference>
<reference key="3">
    <citation type="journal article" date="2010" name="Development">
        <title>Double bromodomain protein BET-1 and MYST HATs establish and maintain stable cell fates in C. elegans.</title>
        <authorList>
            <person name="Shibata Y."/>
            <person name="Takeshita H."/>
            <person name="Sasakawa N."/>
            <person name="Sawa H."/>
        </authorList>
    </citation>
    <scope>FUNCTION</scope>
</reference>
<reference evidence="11" key="4">
    <citation type="journal article" date="2017" name="EMBO Rep.">
        <title>The MYST family histone acetyltransferase complex regulates stress resistance and longevity through transcriptional control of DAF-16/FOXO transcription factors.</title>
        <authorList>
            <person name="Ikeda T."/>
            <person name="Uno M."/>
            <person name="Honjoh S."/>
            <person name="Nishida E."/>
        </authorList>
    </citation>
    <scope>FUNCTION</scope>
    <scope>SUBUNIT</scope>
    <scope>DISRUPTION PHENOTYPE</scope>
</reference>
<accession>Q9TYU5</accession>
<dbReference type="EC" id="2.3.1.48" evidence="1"/>
<dbReference type="EMBL" id="AY551963">
    <property type="protein sequence ID" value="AAS65427.1"/>
    <property type="molecule type" value="mRNA"/>
</dbReference>
<dbReference type="EMBL" id="FO081233">
    <property type="protein sequence ID" value="CCD70078.1"/>
    <property type="molecule type" value="Genomic_DNA"/>
</dbReference>
<dbReference type="PIR" id="T33814">
    <property type="entry name" value="T33814"/>
</dbReference>
<dbReference type="RefSeq" id="NP_504796.1">
    <property type="nucleotide sequence ID" value="NM_072395.5"/>
</dbReference>
<dbReference type="SMR" id="Q9TYU5"/>
<dbReference type="BioGRID" id="44141">
    <property type="interactions" value="38"/>
</dbReference>
<dbReference type="FunCoup" id="Q9TYU5">
    <property type="interactions" value="2943"/>
</dbReference>
<dbReference type="IntAct" id="Q9TYU5">
    <property type="interactions" value="18"/>
</dbReference>
<dbReference type="STRING" id="6239.VC5.4.1"/>
<dbReference type="PaxDb" id="6239-VC5.4.1"/>
<dbReference type="PeptideAtlas" id="Q9TYU5"/>
<dbReference type="EnsemblMetazoa" id="VC5.4.1">
    <property type="protein sequence ID" value="VC5.4.1"/>
    <property type="gene ID" value="WBGene00007029"/>
</dbReference>
<dbReference type="GeneID" id="179096"/>
<dbReference type="KEGG" id="cel:CELE_VC5.4"/>
<dbReference type="UCSC" id="VC5.4">
    <property type="organism name" value="c. elegans"/>
</dbReference>
<dbReference type="AGR" id="WB:WBGene00007029"/>
<dbReference type="CTD" id="179096"/>
<dbReference type="WormBase" id="VC5.4">
    <property type="protein sequence ID" value="CE21225"/>
    <property type="gene ID" value="WBGene00007029"/>
    <property type="gene designation" value="mys-1"/>
</dbReference>
<dbReference type="eggNOG" id="KOG2747">
    <property type="taxonomic scope" value="Eukaryota"/>
</dbReference>
<dbReference type="GeneTree" id="ENSGT00940000163054"/>
<dbReference type="HOGENOM" id="CLU_011815_2_0_1"/>
<dbReference type="InParanoid" id="Q9TYU5"/>
<dbReference type="OMA" id="RIRNVEC"/>
<dbReference type="OrthoDB" id="787137at2759"/>
<dbReference type="PhylomeDB" id="Q9TYU5"/>
<dbReference type="Reactome" id="R-CEL-5693607">
    <property type="pathway name" value="Processing of DNA double-strand break ends"/>
</dbReference>
<dbReference type="SignaLink" id="Q9TYU5"/>
<dbReference type="PRO" id="PR:Q9TYU5"/>
<dbReference type="Proteomes" id="UP000001940">
    <property type="component" value="Chromosome V"/>
</dbReference>
<dbReference type="Bgee" id="WBGene00007029">
    <property type="expression patterns" value="Expressed in embryo and 4 other cell types or tissues"/>
</dbReference>
<dbReference type="GO" id="GO:0035267">
    <property type="term" value="C:NuA4 histone acetyltransferase complex"/>
    <property type="evidence" value="ECO:0000318"/>
    <property type="project" value="GO_Central"/>
</dbReference>
<dbReference type="GO" id="GO:0005634">
    <property type="term" value="C:nucleus"/>
    <property type="evidence" value="ECO:0007669"/>
    <property type="project" value="UniProtKB-SubCell"/>
</dbReference>
<dbReference type="GO" id="GO:0046972">
    <property type="term" value="F:histone H4K16 acetyltransferase activity"/>
    <property type="evidence" value="ECO:0000318"/>
    <property type="project" value="GO_Central"/>
</dbReference>
<dbReference type="GO" id="GO:0008270">
    <property type="term" value="F:zinc ion binding"/>
    <property type="evidence" value="ECO:0007669"/>
    <property type="project" value="UniProtKB-KW"/>
</dbReference>
<dbReference type="GO" id="GO:0001708">
    <property type="term" value="P:cell fate specification"/>
    <property type="evidence" value="ECO:0000315"/>
    <property type="project" value="WormBase"/>
</dbReference>
<dbReference type="GO" id="GO:0000724">
    <property type="term" value="P:double-strand break repair via homologous recombination"/>
    <property type="evidence" value="ECO:0000318"/>
    <property type="project" value="GO_Central"/>
</dbReference>
<dbReference type="GO" id="GO:0009996">
    <property type="term" value="P:negative regulation of cell fate specification"/>
    <property type="evidence" value="ECO:0000315"/>
    <property type="project" value="UniProtKB"/>
</dbReference>
<dbReference type="GO" id="GO:0045892">
    <property type="term" value="P:negative regulation of DNA-templated transcription"/>
    <property type="evidence" value="ECO:0000316"/>
    <property type="project" value="UniProtKB"/>
</dbReference>
<dbReference type="GO" id="GO:0071168">
    <property type="term" value="P:protein localization to chromatin"/>
    <property type="evidence" value="ECO:0000316"/>
    <property type="project" value="WormBase"/>
</dbReference>
<dbReference type="CDD" id="cd18642">
    <property type="entry name" value="CBD_MOF_like"/>
    <property type="match status" value="1"/>
</dbReference>
<dbReference type="CDD" id="cd04301">
    <property type="entry name" value="NAT_SF"/>
    <property type="match status" value="1"/>
</dbReference>
<dbReference type="FunFam" id="1.10.10.10:FF:000022">
    <property type="entry name" value="Histone acetyltransferase"/>
    <property type="match status" value="1"/>
</dbReference>
<dbReference type="FunFam" id="2.30.30.140:FF:000177">
    <property type="entry name" value="Histone acetyltransferase"/>
    <property type="match status" value="1"/>
</dbReference>
<dbReference type="FunFam" id="3.30.60.60:FF:000001">
    <property type="entry name" value="Histone acetyltransferase"/>
    <property type="match status" value="1"/>
</dbReference>
<dbReference type="FunFam" id="3.40.630.30:FF:000002">
    <property type="entry name" value="Histone acetyltransferase"/>
    <property type="match status" value="1"/>
</dbReference>
<dbReference type="Gene3D" id="2.30.30.140">
    <property type="match status" value="1"/>
</dbReference>
<dbReference type="Gene3D" id="3.40.630.30">
    <property type="match status" value="1"/>
</dbReference>
<dbReference type="Gene3D" id="3.30.60.60">
    <property type="entry name" value="N-acetyl transferase-like"/>
    <property type="match status" value="1"/>
</dbReference>
<dbReference type="Gene3D" id="1.10.10.10">
    <property type="entry name" value="Winged helix-like DNA-binding domain superfamily/Winged helix DNA-binding domain"/>
    <property type="match status" value="1"/>
</dbReference>
<dbReference type="InterPro" id="IPR016181">
    <property type="entry name" value="Acyl_CoA_acyltransferase"/>
</dbReference>
<dbReference type="InterPro" id="IPR016197">
    <property type="entry name" value="Chromo-like_dom_sf"/>
</dbReference>
<dbReference type="InterPro" id="IPR000953">
    <property type="entry name" value="Chromo/chromo_shadow_dom"/>
</dbReference>
<dbReference type="InterPro" id="IPR002717">
    <property type="entry name" value="HAT_MYST-type"/>
</dbReference>
<dbReference type="InterPro" id="IPR050603">
    <property type="entry name" value="MYST_HAT"/>
</dbReference>
<dbReference type="InterPro" id="IPR025995">
    <property type="entry name" value="Tudor-knot"/>
</dbReference>
<dbReference type="InterPro" id="IPR036388">
    <property type="entry name" value="WH-like_DNA-bd_sf"/>
</dbReference>
<dbReference type="InterPro" id="IPR040706">
    <property type="entry name" value="Zf-MYST"/>
</dbReference>
<dbReference type="PANTHER" id="PTHR10615">
    <property type="entry name" value="HISTONE ACETYLTRANSFERASE"/>
    <property type="match status" value="1"/>
</dbReference>
<dbReference type="PANTHER" id="PTHR10615:SF219">
    <property type="entry name" value="HISTONE ACETYLTRANSFERASE KAT5"/>
    <property type="match status" value="1"/>
</dbReference>
<dbReference type="Pfam" id="PF01853">
    <property type="entry name" value="MOZ_SAS"/>
    <property type="match status" value="1"/>
</dbReference>
<dbReference type="Pfam" id="PF11717">
    <property type="entry name" value="Tudor-knot"/>
    <property type="match status" value="1"/>
</dbReference>
<dbReference type="Pfam" id="PF17772">
    <property type="entry name" value="zf-MYST"/>
    <property type="match status" value="1"/>
</dbReference>
<dbReference type="SMART" id="SM00298">
    <property type="entry name" value="CHROMO"/>
    <property type="match status" value="1"/>
</dbReference>
<dbReference type="SUPFAM" id="SSF55729">
    <property type="entry name" value="Acyl-CoA N-acyltransferases (Nat)"/>
    <property type="match status" value="1"/>
</dbReference>
<dbReference type="SUPFAM" id="SSF54160">
    <property type="entry name" value="Chromo domain-like"/>
    <property type="match status" value="1"/>
</dbReference>
<dbReference type="PROSITE" id="PS51726">
    <property type="entry name" value="MYST_HAT"/>
    <property type="match status" value="1"/>
</dbReference>
<evidence type="ECO:0000250" key="1">
    <source>
        <dbReference type="UniProtKB" id="Q92993"/>
    </source>
</evidence>
<evidence type="ECO:0000250" key="2">
    <source>
        <dbReference type="UniProtKB" id="Q9H7Z6"/>
    </source>
</evidence>
<evidence type="ECO:0000255" key="3"/>
<evidence type="ECO:0000255" key="4">
    <source>
        <dbReference type="PROSITE-ProRule" id="PRU01063"/>
    </source>
</evidence>
<evidence type="ECO:0000256" key="5">
    <source>
        <dbReference type="SAM" id="MobiDB-lite"/>
    </source>
</evidence>
<evidence type="ECO:0000269" key="6">
    <source>
    </source>
</evidence>
<evidence type="ECO:0000269" key="7">
    <source>
    </source>
</evidence>
<evidence type="ECO:0000269" key="8">
    <source>
    </source>
</evidence>
<evidence type="ECO:0000303" key="9">
    <source>
    </source>
</evidence>
<evidence type="ECO:0000303" key="10">
    <source>
    </source>
</evidence>
<evidence type="ECO:0000305" key="11"/>
<evidence type="ECO:0000312" key="12">
    <source>
        <dbReference type="WormBase" id="VC5.4"/>
    </source>
</evidence>
<organism>
    <name type="scientific">Caenorhabditis elegans</name>
    <dbReference type="NCBI Taxonomy" id="6239"/>
    <lineage>
        <taxon>Eukaryota</taxon>
        <taxon>Metazoa</taxon>
        <taxon>Ecdysozoa</taxon>
        <taxon>Nematoda</taxon>
        <taxon>Chromadorea</taxon>
        <taxon>Rhabditida</taxon>
        <taxon>Rhabditina</taxon>
        <taxon>Rhabditomorpha</taxon>
        <taxon>Rhabditoidea</taxon>
        <taxon>Rhabditidae</taxon>
        <taxon>Peloderinae</taxon>
        <taxon>Caenorhabditis</taxon>
    </lineage>
</organism>
<keyword id="KW-0007">Acetylation</keyword>
<keyword id="KW-0012">Acyltransferase</keyword>
<keyword id="KW-0156">Chromatin regulator</keyword>
<keyword id="KW-0217">Developmental protein</keyword>
<keyword id="KW-0227">DNA damage</keyword>
<keyword id="KW-0234">DNA repair</keyword>
<keyword id="KW-0479">Metal-binding</keyword>
<keyword id="KW-0539">Nucleus</keyword>
<keyword id="KW-1185">Reference proteome</keyword>
<keyword id="KW-0346">Stress response</keyword>
<keyword id="KW-0804">Transcription</keyword>
<keyword id="KW-0805">Transcription regulation</keyword>
<keyword id="KW-0808">Transferase</keyword>
<keyword id="KW-0862">Zinc</keyword>
<keyword id="KW-0863">Zinc-finger</keyword>